<evidence type="ECO:0000255" key="1">
    <source>
        <dbReference type="HAMAP-Rule" id="MF_00111"/>
    </source>
</evidence>
<protein>
    <recommendedName>
        <fullName evidence="1">UDP-N-acetylglucosamine 1-carboxyvinyltransferase 1</fullName>
        <ecNumber evidence="1">2.5.1.7</ecNumber>
    </recommendedName>
    <alternativeName>
        <fullName evidence="1">Enoylpyruvate transferase 1</fullName>
    </alternativeName>
    <alternativeName>
        <fullName evidence="1">UDP-N-acetylglucosamine enolpyruvyl transferase 1</fullName>
        <shortName evidence="1">EPT 1</shortName>
    </alternativeName>
</protein>
<dbReference type="EC" id="2.5.1.7" evidence="1"/>
<dbReference type="EMBL" id="CP000029">
    <property type="protein sequence ID" value="AAW55092.1"/>
    <property type="molecule type" value="Genomic_DNA"/>
</dbReference>
<dbReference type="RefSeq" id="WP_001829978.1">
    <property type="nucleotide sequence ID" value="NC_002976.3"/>
</dbReference>
<dbReference type="SMR" id="Q5HMC2"/>
<dbReference type="STRING" id="176279.SERP1706"/>
<dbReference type="GeneID" id="50018202"/>
<dbReference type="KEGG" id="ser:SERP1706"/>
<dbReference type="eggNOG" id="COG0766">
    <property type="taxonomic scope" value="Bacteria"/>
</dbReference>
<dbReference type="HOGENOM" id="CLU_027387_0_0_9"/>
<dbReference type="UniPathway" id="UPA00219"/>
<dbReference type="Proteomes" id="UP000000531">
    <property type="component" value="Chromosome"/>
</dbReference>
<dbReference type="GO" id="GO:0005737">
    <property type="term" value="C:cytoplasm"/>
    <property type="evidence" value="ECO:0007669"/>
    <property type="project" value="UniProtKB-SubCell"/>
</dbReference>
<dbReference type="GO" id="GO:0008760">
    <property type="term" value="F:UDP-N-acetylglucosamine 1-carboxyvinyltransferase activity"/>
    <property type="evidence" value="ECO:0007669"/>
    <property type="project" value="UniProtKB-UniRule"/>
</dbReference>
<dbReference type="GO" id="GO:0051301">
    <property type="term" value="P:cell division"/>
    <property type="evidence" value="ECO:0007669"/>
    <property type="project" value="UniProtKB-KW"/>
</dbReference>
<dbReference type="GO" id="GO:0071555">
    <property type="term" value="P:cell wall organization"/>
    <property type="evidence" value="ECO:0007669"/>
    <property type="project" value="UniProtKB-KW"/>
</dbReference>
<dbReference type="GO" id="GO:0009252">
    <property type="term" value="P:peptidoglycan biosynthetic process"/>
    <property type="evidence" value="ECO:0007669"/>
    <property type="project" value="UniProtKB-UniRule"/>
</dbReference>
<dbReference type="GO" id="GO:0008360">
    <property type="term" value="P:regulation of cell shape"/>
    <property type="evidence" value="ECO:0007669"/>
    <property type="project" value="UniProtKB-KW"/>
</dbReference>
<dbReference type="GO" id="GO:0019277">
    <property type="term" value="P:UDP-N-acetylgalactosamine biosynthetic process"/>
    <property type="evidence" value="ECO:0007669"/>
    <property type="project" value="InterPro"/>
</dbReference>
<dbReference type="CDD" id="cd01555">
    <property type="entry name" value="UdpNAET"/>
    <property type="match status" value="1"/>
</dbReference>
<dbReference type="FunFam" id="3.65.10.10:FF:000001">
    <property type="entry name" value="UDP-N-acetylglucosamine 1-carboxyvinyltransferase"/>
    <property type="match status" value="1"/>
</dbReference>
<dbReference type="Gene3D" id="3.65.10.10">
    <property type="entry name" value="Enolpyruvate transferase domain"/>
    <property type="match status" value="2"/>
</dbReference>
<dbReference type="HAMAP" id="MF_00111">
    <property type="entry name" value="MurA"/>
    <property type="match status" value="1"/>
</dbReference>
<dbReference type="InterPro" id="IPR001986">
    <property type="entry name" value="Enolpyruvate_Tfrase_dom"/>
</dbReference>
<dbReference type="InterPro" id="IPR036968">
    <property type="entry name" value="Enolpyruvate_Tfrase_sf"/>
</dbReference>
<dbReference type="InterPro" id="IPR050068">
    <property type="entry name" value="MurA_subfamily"/>
</dbReference>
<dbReference type="InterPro" id="IPR013792">
    <property type="entry name" value="RNA3'P_cycl/enolpyr_Trfase_a/b"/>
</dbReference>
<dbReference type="InterPro" id="IPR005750">
    <property type="entry name" value="UDP_GlcNAc_COvinyl_MurA"/>
</dbReference>
<dbReference type="NCBIfam" id="TIGR01072">
    <property type="entry name" value="murA"/>
    <property type="match status" value="1"/>
</dbReference>
<dbReference type="NCBIfam" id="NF006873">
    <property type="entry name" value="PRK09369.1"/>
    <property type="match status" value="1"/>
</dbReference>
<dbReference type="PANTHER" id="PTHR43783">
    <property type="entry name" value="UDP-N-ACETYLGLUCOSAMINE 1-CARBOXYVINYLTRANSFERASE"/>
    <property type="match status" value="1"/>
</dbReference>
<dbReference type="PANTHER" id="PTHR43783:SF1">
    <property type="entry name" value="UDP-N-ACETYLGLUCOSAMINE 1-CARBOXYVINYLTRANSFERASE"/>
    <property type="match status" value="1"/>
</dbReference>
<dbReference type="Pfam" id="PF00275">
    <property type="entry name" value="EPSP_synthase"/>
    <property type="match status" value="1"/>
</dbReference>
<dbReference type="SUPFAM" id="SSF55205">
    <property type="entry name" value="EPT/RTPC-like"/>
    <property type="match status" value="1"/>
</dbReference>
<organism>
    <name type="scientific">Staphylococcus epidermidis (strain ATCC 35984 / DSM 28319 / BCRC 17069 / CCUG 31568 / BM 3577 / RP62A)</name>
    <dbReference type="NCBI Taxonomy" id="176279"/>
    <lineage>
        <taxon>Bacteria</taxon>
        <taxon>Bacillati</taxon>
        <taxon>Bacillota</taxon>
        <taxon>Bacilli</taxon>
        <taxon>Bacillales</taxon>
        <taxon>Staphylococcaceae</taxon>
        <taxon>Staphylococcus</taxon>
    </lineage>
</organism>
<comment type="function">
    <text evidence="1">Cell wall formation. Adds enolpyruvyl to UDP-N-acetylglucosamine.</text>
</comment>
<comment type="catalytic activity">
    <reaction evidence="1">
        <text>phosphoenolpyruvate + UDP-N-acetyl-alpha-D-glucosamine = UDP-N-acetyl-3-O-(1-carboxyvinyl)-alpha-D-glucosamine + phosphate</text>
        <dbReference type="Rhea" id="RHEA:18681"/>
        <dbReference type="ChEBI" id="CHEBI:43474"/>
        <dbReference type="ChEBI" id="CHEBI:57705"/>
        <dbReference type="ChEBI" id="CHEBI:58702"/>
        <dbReference type="ChEBI" id="CHEBI:68483"/>
        <dbReference type="EC" id="2.5.1.7"/>
    </reaction>
</comment>
<comment type="pathway">
    <text evidence="1">Cell wall biogenesis; peptidoglycan biosynthesis.</text>
</comment>
<comment type="subcellular location">
    <subcellularLocation>
        <location evidence="1">Cytoplasm</location>
    </subcellularLocation>
</comment>
<comment type="similarity">
    <text evidence="1">Belongs to the EPSP synthase family. MurA subfamily.</text>
</comment>
<feature type="chain" id="PRO_0000178928" description="UDP-N-acetylglucosamine 1-carboxyvinyltransferase 1">
    <location>
        <begin position="1"/>
        <end position="421"/>
    </location>
</feature>
<feature type="active site" description="Proton donor" evidence="1">
    <location>
        <position position="119"/>
    </location>
</feature>
<feature type="binding site" evidence="1">
    <location>
        <begin position="22"/>
        <end position="23"/>
    </location>
    <ligand>
        <name>phosphoenolpyruvate</name>
        <dbReference type="ChEBI" id="CHEBI:58702"/>
    </ligand>
</feature>
<feature type="binding site" evidence="1">
    <location>
        <position position="95"/>
    </location>
    <ligand>
        <name>UDP-N-acetyl-alpha-D-glucosamine</name>
        <dbReference type="ChEBI" id="CHEBI:57705"/>
    </ligand>
</feature>
<feature type="binding site" evidence="1">
    <location>
        <begin position="124"/>
        <end position="128"/>
    </location>
    <ligand>
        <name>UDP-N-acetyl-alpha-D-glucosamine</name>
        <dbReference type="ChEBI" id="CHEBI:57705"/>
    </ligand>
</feature>
<feature type="binding site" evidence="1">
    <location>
        <position position="308"/>
    </location>
    <ligand>
        <name>UDP-N-acetyl-alpha-D-glucosamine</name>
        <dbReference type="ChEBI" id="CHEBI:57705"/>
    </ligand>
</feature>
<feature type="binding site" evidence="1">
    <location>
        <position position="330"/>
    </location>
    <ligand>
        <name>UDP-N-acetyl-alpha-D-glucosamine</name>
        <dbReference type="ChEBI" id="CHEBI:57705"/>
    </ligand>
</feature>
<feature type="modified residue" description="2-(S-cysteinyl)pyruvic acid O-phosphothioketal" evidence="1">
    <location>
        <position position="119"/>
    </location>
</feature>
<gene>
    <name evidence="1" type="primary">murA1</name>
    <name type="synonym">murA</name>
    <name type="ordered locus">SERP1706</name>
</gene>
<accession>Q5HMC2</accession>
<reference key="1">
    <citation type="journal article" date="2005" name="J. Bacteriol.">
        <title>Insights on evolution of virulence and resistance from the complete genome analysis of an early methicillin-resistant Staphylococcus aureus strain and a biofilm-producing methicillin-resistant Staphylococcus epidermidis strain.</title>
        <authorList>
            <person name="Gill S.R."/>
            <person name="Fouts D.E."/>
            <person name="Archer G.L."/>
            <person name="Mongodin E.F."/>
            <person name="DeBoy R.T."/>
            <person name="Ravel J."/>
            <person name="Paulsen I.T."/>
            <person name="Kolonay J.F."/>
            <person name="Brinkac L.M."/>
            <person name="Beanan M.J."/>
            <person name="Dodson R.J."/>
            <person name="Daugherty S.C."/>
            <person name="Madupu R."/>
            <person name="Angiuoli S.V."/>
            <person name="Durkin A.S."/>
            <person name="Haft D.H."/>
            <person name="Vamathevan J.J."/>
            <person name="Khouri H."/>
            <person name="Utterback T.R."/>
            <person name="Lee C."/>
            <person name="Dimitrov G."/>
            <person name="Jiang L."/>
            <person name="Qin H."/>
            <person name="Weidman J."/>
            <person name="Tran K."/>
            <person name="Kang K.H."/>
            <person name="Hance I.R."/>
            <person name="Nelson K.E."/>
            <person name="Fraser C.M."/>
        </authorList>
    </citation>
    <scope>NUCLEOTIDE SEQUENCE [LARGE SCALE GENOMIC DNA]</scope>
    <source>
        <strain>ATCC 35984 / DSM 28319 / BCRC 17069 / CCUG 31568 / BM 3577 / RP62A</strain>
    </source>
</reference>
<keyword id="KW-0131">Cell cycle</keyword>
<keyword id="KW-0132">Cell division</keyword>
<keyword id="KW-0133">Cell shape</keyword>
<keyword id="KW-0961">Cell wall biogenesis/degradation</keyword>
<keyword id="KW-0963">Cytoplasm</keyword>
<keyword id="KW-0573">Peptidoglycan synthesis</keyword>
<keyword id="KW-0670">Pyruvate</keyword>
<keyword id="KW-1185">Reference proteome</keyword>
<keyword id="KW-0808">Transferase</keyword>
<name>MURA1_STAEQ</name>
<proteinExistence type="inferred from homology"/>
<sequence length="421" mass="45120">MDKIVINGGNRLTGEVNVEGAKNAVLPVLTASLLASEGHSKLVNVPELSDVETINNVLSTLNANVEYDKDKNAVKVDATKTLNEEAPYEYVSKMRASILVMGPLLARLGHAIVALPGGCAIGTRPIEQHIKGFEALGADIHLENGNIYANAKDGLKGAHIHLDFPSVGATQNIIMAASLASGKSIIENVAKEPEIVDLANYINEMGGKITGAGTDTITIHGVEKLYGVEHAIIPDRIEAGTLLIAGAITRGDIFVRGAIKEHMASLIYKLEEMGVDLEYYEEGIRVTANGDLNPVDVKTLPHPGFPTDMQSQMMALLLTANGHKVITETVFENRFMHVAEFRRMNANISVEGRSAKIEGKSHLQGAQVKATDLRAAAALILAGLVAEGTTQVTELKHLDRGYVNLHGKLKSLGANIERVNR</sequence>